<sequence>MSLGLVGRKCGMTRIFTEDGVSIPVTVVQVEPNKVTQVKTVEKDGYNAIQVTTGFKKRSNVNKPMAGHYAKASVEPGRGLWEFTVDAAAEYQVGSSFDATMFEAGQKVDVRGVSKGKGFQGGVKRHNFATQDATHGNSLSHRVHGSTGQNQTPGRVFKNKKMAGHLGNENVTIQSLEVVRVDAENGLLLLKGGIPGSVGGDIIVTPAVKSW</sequence>
<gene>
    <name evidence="1" type="primary">rplC</name>
    <name type="ordered locus">FTF0325</name>
</gene>
<accession>Q14JC0</accession>
<feature type="chain" id="PRO_1000052050" description="Large ribosomal subunit protein uL3">
    <location>
        <begin position="1"/>
        <end position="211"/>
    </location>
</feature>
<feature type="modified residue" description="N5-methylglutamine" evidence="1">
    <location>
        <position position="151"/>
    </location>
</feature>
<name>RL3_FRAT1</name>
<organism>
    <name type="scientific">Francisella tularensis subsp. tularensis (strain FSC 198)</name>
    <dbReference type="NCBI Taxonomy" id="393115"/>
    <lineage>
        <taxon>Bacteria</taxon>
        <taxon>Pseudomonadati</taxon>
        <taxon>Pseudomonadota</taxon>
        <taxon>Gammaproteobacteria</taxon>
        <taxon>Thiotrichales</taxon>
        <taxon>Francisellaceae</taxon>
        <taxon>Francisella</taxon>
    </lineage>
</organism>
<evidence type="ECO:0000255" key="1">
    <source>
        <dbReference type="HAMAP-Rule" id="MF_01325"/>
    </source>
</evidence>
<evidence type="ECO:0000305" key="2"/>
<keyword id="KW-0488">Methylation</keyword>
<keyword id="KW-0687">Ribonucleoprotein</keyword>
<keyword id="KW-0689">Ribosomal protein</keyword>
<keyword id="KW-0694">RNA-binding</keyword>
<keyword id="KW-0699">rRNA-binding</keyword>
<comment type="function">
    <text evidence="1">One of the primary rRNA binding proteins, it binds directly near the 3'-end of the 23S rRNA, where it nucleates assembly of the 50S subunit.</text>
</comment>
<comment type="subunit">
    <text evidence="1">Part of the 50S ribosomal subunit. Forms a cluster with proteins L14 and L19.</text>
</comment>
<comment type="PTM">
    <text evidence="1">Methylated by PrmB.</text>
</comment>
<comment type="similarity">
    <text evidence="1">Belongs to the universal ribosomal protein uL3 family.</text>
</comment>
<reference key="1">
    <citation type="journal article" date="2007" name="PLoS ONE">
        <title>Genome sequencing shows that European isolates of Francisella tularensis subspecies tularensis are almost identical to US laboratory strain Schu S4.</title>
        <authorList>
            <person name="Chaudhuri R.R."/>
            <person name="Ren C.-P."/>
            <person name="Desmond L."/>
            <person name="Vincent G.A."/>
            <person name="Silman N.J."/>
            <person name="Brehm J.K."/>
            <person name="Elmore M.J."/>
            <person name="Hudson M.J."/>
            <person name="Forsman M."/>
            <person name="Isherwood K.E."/>
            <person name="Gurycova D."/>
            <person name="Minton N.P."/>
            <person name="Titball R.W."/>
            <person name="Pallen M.J."/>
            <person name="Vipond R."/>
        </authorList>
    </citation>
    <scope>NUCLEOTIDE SEQUENCE [LARGE SCALE GENOMIC DNA]</scope>
    <source>
        <strain>FSC 198</strain>
    </source>
</reference>
<dbReference type="EMBL" id="AM286280">
    <property type="protein sequence ID" value="CAL08341.1"/>
    <property type="molecule type" value="Genomic_DNA"/>
</dbReference>
<dbReference type="RefSeq" id="WP_003021602.1">
    <property type="nucleotide sequence ID" value="NC_008245.1"/>
</dbReference>
<dbReference type="SMR" id="Q14JC0"/>
<dbReference type="KEGG" id="ftf:FTF0325"/>
<dbReference type="HOGENOM" id="CLU_044142_4_1_6"/>
<dbReference type="GO" id="GO:0022625">
    <property type="term" value="C:cytosolic large ribosomal subunit"/>
    <property type="evidence" value="ECO:0007669"/>
    <property type="project" value="TreeGrafter"/>
</dbReference>
<dbReference type="GO" id="GO:0019843">
    <property type="term" value="F:rRNA binding"/>
    <property type="evidence" value="ECO:0007669"/>
    <property type="project" value="UniProtKB-UniRule"/>
</dbReference>
<dbReference type="GO" id="GO:0003735">
    <property type="term" value="F:structural constituent of ribosome"/>
    <property type="evidence" value="ECO:0007669"/>
    <property type="project" value="InterPro"/>
</dbReference>
<dbReference type="GO" id="GO:0006412">
    <property type="term" value="P:translation"/>
    <property type="evidence" value="ECO:0007669"/>
    <property type="project" value="UniProtKB-UniRule"/>
</dbReference>
<dbReference type="FunFam" id="2.40.30.10:FF:000004">
    <property type="entry name" value="50S ribosomal protein L3"/>
    <property type="match status" value="1"/>
</dbReference>
<dbReference type="FunFam" id="3.30.160.810:FF:000001">
    <property type="entry name" value="50S ribosomal protein L3"/>
    <property type="match status" value="1"/>
</dbReference>
<dbReference type="Gene3D" id="3.30.160.810">
    <property type="match status" value="1"/>
</dbReference>
<dbReference type="Gene3D" id="2.40.30.10">
    <property type="entry name" value="Translation factors"/>
    <property type="match status" value="1"/>
</dbReference>
<dbReference type="HAMAP" id="MF_01325_B">
    <property type="entry name" value="Ribosomal_uL3_B"/>
    <property type="match status" value="1"/>
</dbReference>
<dbReference type="InterPro" id="IPR000597">
    <property type="entry name" value="Ribosomal_uL3"/>
</dbReference>
<dbReference type="InterPro" id="IPR019927">
    <property type="entry name" value="Ribosomal_uL3_bac/org-type"/>
</dbReference>
<dbReference type="InterPro" id="IPR019926">
    <property type="entry name" value="Ribosomal_uL3_CS"/>
</dbReference>
<dbReference type="InterPro" id="IPR009000">
    <property type="entry name" value="Transl_B-barrel_sf"/>
</dbReference>
<dbReference type="NCBIfam" id="TIGR03625">
    <property type="entry name" value="L3_bact"/>
    <property type="match status" value="1"/>
</dbReference>
<dbReference type="PANTHER" id="PTHR11229">
    <property type="entry name" value="50S RIBOSOMAL PROTEIN L3"/>
    <property type="match status" value="1"/>
</dbReference>
<dbReference type="PANTHER" id="PTHR11229:SF16">
    <property type="entry name" value="LARGE RIBOSOMAL SUBUNIT PROTEIN UL3C"/>
    <property type="match status" value="1"/>
</dbReference>
<dbReference type="Pfam" id="PF00297">
    <property type="entry name" value="Ribosomal_L3"/>
    <property type="match status" value="1"/>
</dbReference>
<dbReference type="SUPFAM" id="SSF50447">
    <property type="entry name" value="Translation proteins"/>
    <property type="match status" value="1"/>
</dbReference>
<dbReference type="PROSITE" id="PS00474">
    <property type="entry name" value="RIBOSOMAL_L3"/>
    <property type="match status" value="1"/>
</dbReference>
<proteinExistence type="inferred from homology"/>
<protein>
    <recommendedName>
        <fullName evidence="1">Large ribosomal subunit protein uL3</fullName>
    </recommendedName>
    <alternativeName>
        <fullName evidence="2">50S ribosomal protein L3</fullName>
    </alternativeName>
</protein>